<proteinExistence type="evidence at protein level"/>
<name>HCY2_MEGCR</name>
<gene>
    <name evidence="9" type="primary">KLH2</name>
</gene>
<dbReference type="EMBL" id="AJ698342">
    <property type="protein sequence ID" value="CAG28310.1"/>
    <property type="molecule type" value="Genomic_DNA"/>
</dbReference>
<dbReference type="GlyConnect" id="211">
    <property type="glycosylation" value="15 N-Linked glycans"/>
</dbReference>
<dbReference type="GlyCosmos" id="Q10584">
    <property type="glycosylation" value="3 sites, 26 glycans"/>
</dbReference>
<dbReference type="GO" id="GO:0005576">
    <property type="term" value="C:extracellular region"/>
    <property type="evidence" value="ECO:0007669"/>
    <property type="project" value="UniProtKB-SubCell"/>
</dbReference>
<dbReference type="GO" id="GO:0046872">
    <property type="term" value="F:metal ion binding"/>
    <property type="evidence" value="ECO:0007669"/>
    <property type="project" value="UniProtKB-KW"/>
</dbReference>
<dbReference type="GO" id="GO:0016491">
    <property type="term" value="F:oxidoreductase activity"/>
    <property type="evidence" value="ECO:0007669"/>
    <property type="project" value="InterPro"/>
</dbReference>
<dbReference type="GO" id="GO:0005344">
    <property type="term" value="F:oxygen carrier activity"/>
    <property type="evidence" value="ECO:0007669"/>
    <property type="project" value="UniProtKB-KW"/>
</dbReference>
<dbReference type="Gene3D" id="2.60.40.2570">
    <property type="match status" value="1"/>
</dbReference>
<dbReference type="Gene3D" id="1.10.1280.10">
    <property type="entry name" value="Di-copper center containing domain from catechol oxidase"/>
    <property type="match status" value="8"/>
</dbReference>
<dbReference type="Gene3D" id="2.60.310.10">
    <property type="entry name" value="Haemocyanin C-terminal domain"/>
    <property type="match status" value="8"/>
</dbReference>
<dbReference type="InterPro" id="IPR008922">
    <property type="entry name" value="Di-copper_centre_dom_sf"/>
</dbReference>
<dbReference type="InterPro" id="IPR028999">
    <property type="entry name" value="Haemocyanin_beta-sandwich"/>
</dbReference>
<dbReference type="InterPro" id="IPR036848">
    <property type="entry name" value="Haemocyanin_C_sf"/>
</dbReference>
<dbReference type="InterPro" id="IPR050316">
    <property type="entry name" value="Tyrosinase/Hemocyanin"/>
</dbReference>
<dbReference type="InterPro" id="IPR002227">
    <property type="entry name" value="Tyrosinase_Cu-bd"/>
</dbReference>
<dbReference type="PANTHER" id="PTHR11474:SF76">
    <property type="entry name" value="SHKT DOMAIN-CONTAINING PROTEIN"/>
    <property type="match status" value="1"/>
</dbReference>
<dbReference type="PANTHER" id="PTHR11474">
    <property type="entry name" value="TYROSINASE FAMILY MEMBER"/>
    <property type="match status" value="1"/>
</dbReference>
<dbReference type="Pfam" id="PF14830">
    <property type="entry name" value="Haemocyan_bet_s"/>
    <property type="match status" value="8"/>
</dbReference>
<dbReference type="Pfam" id="PF00264">
    <property type="entry name" value="Tyrosinase"/>
    <property type="match status" value="8"/>
</dbReference>
<dbReference type="PRINTS" id="PR00092">
    <property type="entry name" value="TYROSINASE"/>
</dbReference>
<dbReference type="SUPFAM" id="SSF81277">
    <property type="entry name" value="C-terminal domain of mollusc hemocyanin"/>
    <property type="match status" value="8"/>
</dbReference>
<dbReference type="SUPFAM" id="SSF48056">
    <property type="entry name" value="Di-copper centre-containing domain"/>
    <property type="match status" value="8"/>
</dbReference>
<dbReference type="PROSITE" id="PS00497">
    <property type="entry name" value="TYROSINASE_1"/>
    <property type="match status" value="7"/>
</dbReference>
<dbReference type="PROSITE" id="PS00498">
    <property type="entry name" value="TYROSINASE_2"/>
    <property type="match status" value="7"/>
</dbReference>
<organism>
    <name type="scientific">Megathura crenulata</name>
    <name type="common">Giant keyhole limpet</name>
    <dbReference type="NCBI Taxonomy" id="55429"/>
    <lineage>
        <taxon>Eukaryota</taxon>
        <taxon>Metazoa</taxon>
        <taxon>Spiralia</taxon>
        <taxon>Lophotrochozoa</taxon>
        <taxon>Mollusca</taxon>
        <taxon>Gastropoda</taxon>
        <taxon>Vetigastropoda</taxon>
        <taxon>Lepetellida</taxon>
        <taxon>Fissurelloidea</taxon>
        <taxon>Fissurellidae</taxon>
        <taxon>Megathura</taxon>
    </lineage>
</organism>
<feature type="signal peptide" evidence="3">
    <location>
        <begin position="1"/>
        <end position="19"/>
    </location>
</feature>
<feature type="chain" id="PRO_0000204305" description="Hemocyanin 2">
    <location>
        <begin position="20"/>
        <end position="3421"/>
    </location>
</feature>
<feature type="repeat" description="WD 1" evidence="3">
    <location>
        <begin position="632"/>
        <end position="673"/>
    </location>
</feature>
<feature type="repeat" description="WD 2" evidence="3">
    <location>
        <begin position="1043"/>
        <end position="1084"/>
    </location>
</feature>
<feature type="repeat" description="WD 3" evidence="3">
    <location>
        <begin position="1387"/>
        <end position="1425"/>
    </location>
</feature>
<feature type="repeat" description="WD 4" evidence="3">
    <location>
        <begin position="1454"/>
        <end position="1495"/>
    </location>
</feature>
<feature type="repeat" description="WD 5" evidence="3">
    <location>
        <begin position="1878"/>
        <end position="1919"/>
    </location>
</feature>
<feature type="repeat" description="WD 6" evidence="3">
    <location>
        <begin position="2168"/>
        <end position="2204"/>
    </location>
</feature>
<feature type="repeat" description="WD 7" evidence="3">
    <location>
        <begin position="2700"/>
        <end position="2742"/>
    </location>
</feature>
<feature type="repeat" description="WD 8" evidence="3">
    <location>
        <begin position="3109"/>
        <end position="3150"/>
    </location>
</feature>
<feature type="region of interest" description="Functional unit a (wall)" evidence="2">
    <location>
        <begin position="20"/>
        <end position="442"/>
    </location>
</feature>
<feature type="region of interest" description="Functional unit b (wall)" evidence="2">
    <location>
        <begin position="443"/>
        <end position="853"/>
    </location>
</feature>
<feature type="region of interest" description="Functional unit c (wall)" evidence="2">
    <location>
        <begin position="854"/>
        <end position="1275"/>
    </location>
</feature>
<feature type="region of interest" description="Functional unit d (wall)" evidence="2">
    <location>
        <begin position="1276"/>
        <end position="1685"/>
    </location>
</feature>
<feature type="region of interest" description="Functional unit e (wall)" evidence="2">
    <location>
        <begin position="1686"/>
        <end position="2102"/>
    </location>
</feature>
<feature type="region of interest" description="Functional unit f (wall)" evidence="2">
    <location>
        <begin position="2103"/>
        <end position="2522"/>
    </location>
</feature>
<feature type="region of interest" description="Functional unit g (internal arc)" evidence="2">
    <location>
        <begin position="2523"/>
        <end position="2929"/>
    </location>
</feature>
<feature type="region of interest" description="Disordered" evidence="5">
    <location>
        <begin position="2898"/>
        <end position="2927"/>
    </location>
</feature>
<feature type="region of interest" description="Functional unit h (internal slab)" evidence="2">
    <location>
        <begin position="2930"/>
        <end position="3421"/>
    </location>
</feature>
<feature type="binding site" evidence="2">
    <location>
        <position position="62"/>
    </location>
    <ligand>
        <name>Cu cation</name>
        <dbReference type="ChEBI" id="CHEBI:23378"/>
        <label>1</label>
    </ligand>
</feature>
<feature type="binding site" evidence="2">
    <location>
        <position position="81"/>
    </location>
    <ligand>
        <name>Cu cation</name>
        <dbReference type="ChEBI" id="CHEBI:23378"/>
        <label>1</label>
    </ligand>
</feature>
<feature type="binding site" evidence="2">
    <location>
        <position position="90"/>
    </location>
    <ligand>
        <name>Cu cation</name>
        <dbReference type="ChEBI" id="CHEBI:23378"/>
        <label>1</label>
    </ligand>
</feature>
<feature type="binding site" evidence="2">
    <location>
        <position position="200"/>
    </location>
    <ligand>
        <name>Cu cation</name>
        <dbReference type="ChEBI" id="CHEBI:23378"/>
        <label>2</label>
    </ligand>
</feature>
<feature type="binding site" evidence="2">
    <location>
        <position position="204"/>
    </location>
    <ligand>
        <name>Cu cation</name>
        <dbReference type="ChEBI" id="CHEBI:23378"/>
        <label>2</label>
    </ligand>
</feature>
<feature type="binding site" evidence="2">
    <location>
        <position position="231"/>
    </location>
    <ligand>
        <name>Cu cation</name>
        <dbReference type="ChEBI" id="CHEBI:23378"/>
        <label>2</label>
    </ligand>
</feature>
<feature type="binding site" evidence="2">
    <location>
        <position position="483"/>
    </location>
    <ligand>
        <name>Cu cation</name>
        <dbReference type="ChEBI" id="CHEBI:23378"/>
        <label>3</label>
    </ligand>
</feature>
<feature type="binding site" evidence="2">
    <location>
        <position position="503"/>
    </location>
    <ligand>
        <name>Cu cation</name>
        <dbReference type="ChEBI" id="CHEBI:23378"/>
        <label>3</label>
    </ligand>
</feature>
<feature type="binding site" evidence="2">
    <location>
        <position position="512"/>
    </location>
    <ligand>
        <name>Cu cation</name>
        <dbReference type="ChEBI" id="CHEBI:23378"/>
        <label>3</label>
    </ligand>
</feature>
<feature type="binding site" evidence="2">
    <location>
        <position position="622"/>
    </location>
    <ligand>
        <name>Cu cation</name>
        <dbReference type="ChEBI" id="CHEBI:23378"/>
        <label>4</label>
    </ligand>
</feature>
<feature type="binding site" evidence="2">
    <location>
        <position position="626"/>
    </location>
    <ligand>
        <name>Cu cation</name>
        <dbReference type="ChEBI" id="CHEBI:23378"/>
        <label>4</label>
    </ligand>
</feature>
<feature type="binding site" evidence="2">
    <location>
        <position position="653"/>
    </location>
    <ligand>
        <name>Cu cation</name>
        <dbReference type="ChEBI" id="CHEBI:23378"/>
        <label>4</label>
    </ligand>
</feature>
<feature type="binding site" evidence="2">
    <location>
        <position position="894"/>
    </location>
    <ligand>
        <name>Cu cation</name>
        <dbReference type="ChEBI" id="CHEBI:23378"/>
        <label>5</label>
    </ligand>
</feature>
<feature type="binding site" evidence="2">
    <location>
        <position position="914"/>
    </location>
    <ligand>
        <name>Cu cation</name>
        <dbReference type="ChEBI" id="CHEBI:23378"/>
        <label>5</label>
    </ligand>
</feature>
<feature type="binding site" evidence="2">
    <location>
        <position position="923"/>
    </location>
    <ligand>
        <name>Cu cation</name>
        <dbReference type="ChEBI" id="CHEBI:23378"/>
        <label>5</label>
    </ligand>
</feature>
<feature type="binding site" evidence="2">
    <location>
        <position position="1033"/>
    </location>
    <ligand>
        <name>Cu cation</name>
        <dbReference type="ChEBI" id="CHEBI:23378"/>
        <label>6</label>
    </ligand>
</feature>
<feature type="binding site" evidence="2">
    <location>
        <position position="1037"/>
    </location>
    <ligand>
        <name>Cu cation</name>
        <dbReference type="ChEBI" id="CHEBI:23378"/>
        <label>6</label>
    </ligand>
</feature>
<feature type="binding site" evidence="2 10">
    <location>
        <position position="1063"/>
    </location>
    <ligand>
        <name>Cu cation</name>
        <dbReference type="ChEBI" id="CHEBI:23378"/>
        <label>6</label>
    </ligand>
</feature>
<feature type="binding site" evidence="2">
    <location>
        <position position="1313"/>
    </location>
    <ligand>
        <name>Cu cation</name>
        <dbReference type="ChEBI" id="CHEBI:23378"/>
        <label>7</label>
    </ligand>
</feature>
<feature type="binding site" evidence="2">
    <location>
        <position position="1331"/>
    </location>
    <ligand>
        <name>Cu cation</name>
        <dbReference type="ChEBI" id="CHEBI:23378"/>
        <label>7</label>
    </ligand>
</feature>
<feature type="binding site" evidence="2">
    <location>
        <position position="1340"/>
    </location>
    <ligand>
        <name>Cu cation</name>
        <dbReference type="ChEBI" id="CHEBI:23378"/>
        <label>7</label>
    </ligand>
</feature>
<feature type="binding site" evidence="2">
    <location>
        <position position="1444"/>
    </location>
    <ligand>
        <name>Cu cation</name>
        <dbReference type="ChEBI" id="CHEBI:23378"/>
        <label>8</label>
    </ligand>
</feature>
<feature type="binding site" evidence="2">
    <location>
        <position position="1448"/>
    </location>
    <ligand>
        <name>Cu cation</name>
        <dbReference type="ChEBI" id="CHEBI:23378"/>
        <label>8</label>
    </ligand>
</feature>
<feature type="binding site" evidence="2">
    <location>
        <position position="1475"/>
    </location>
    <ligand>
        <name>Cu cation</name>
        <dbReference type="ChEBI" id="CHEBI:23378"/>
        <label>8</label>
    </ligand>
</feature>
<feature type="binding site" evidence="2">
    <location>
        <position position="1726"/>
    </location>
    <ligand>
        <name>Cu cation</name>
        <dbReference type="ChEBI" id="CHEBI:23378"/>
        <label>9</label>
    </ligand>
</feature>
<feature type="binding site" evidence="2">
    <location>
        <position position="1746"/>
    </location>
    <ligand>
        <name>Cu cation</name>
        <dbReference type="ChEBI" id="CHEBI:23378"/>
        <label>9</label>
    </ligand>
</feature>
<feature type="binding site" evidence="2">
    <location>
        <position position="1755"/>
    </location>
    <ligand>
        <name>Cu cation</name>
        <dbReference type="ChEBI" id="CHEBI:23378"/>
        <label>9</label>
    </ligand>
</feature>
<feature type="binding site" evidence="2">
    <location>
        <position position="1868"/>
    </location>
    <ligand>
        <name>Cu cation</name>
        <dbReference type="ChEBI" id="CHEBI:23378"/>
        <label>10</label>
    </ligand>
</feature>
<feature type="binding site" evidence="2">
    <location>
        <position position="1872"/>
    </location>
    <ligand>
        <name>Cu cation</name>
        <dbReference type="ChEBI" id="CHEBI:23378"/>
        <label>10</label>
    </ligand>
</feature>
<feature type="binding site" evidence="2">
    <location>
        <position position="1899"/>
    </location>
    <ligand>
        <name>Cu cation</name>
        <dbReference type="ChEBI" id="CHEBI:23378"/>
        <label>10</label>
    </ligand>
</feature>
<feature type="binding site" evidence="2">
    <location>
        <position position="2143"/>
    </location>
    <ligand>
        <name>Cu cation</name>
        <dbReference type="ChEBI" id="CHEBI:23378"/>
        <label>11</label>
    </ligand>
</feature>
<feature type="binding site" evidence="2">
    <location>
        <position position="2162"/>
    </location>
    <ligand>
        <name>Cu cation</name>
        <dbReference type="ChEBI" id="CHEBI:23378"/>
        <label>11</label>
    </ligand>
</feature>
<feature type="binding site" evidence="2">
    <location>
        <position position="2171"/>
    </location>
    <ligand>
        <name>Cu cation</name>
        <dbReference type="ChEBI" id="CHEBI:23378"/>
        <label>11</label>
    </ligand>
</feature>
<feature type="binding site" evidence="2">
    <location>
        <position position="2281"/>
    </location>
    <ligand>
        <name>Cu cation</name>
        <dbReference type="ChEBI" id="CHEBI:23378"/>
        <label>12</label>
    </ligand>
</feature>
<feature type="binding site" evidence="2">
    <location>
        <position position="2285"/>
    </location>
    <ligand>
        <name>Cu cation</name>
        <dbReference type="ChEBI" id="CHEBI:23378"/>
        <label>12</label>
    </ligand>
</feature>
<feature type="binding site" evidence="2">
    <location>
        <position position="2312"/>
    </location>
    <ligand>
        <name>Cu cation</name>
        <dbReference type="ChEBI" id="CHEBI:23378"/>
        <label>12</label>
    </ligand>
</feature>
<feature type="binding site" evidence="2">
    <location>
        <position position="2563"/>
    </location>
    <ligand>
        <name>Cu cation</name>
        <dbReference type="ChEBI" id="CHEBI:23378"/>
        <label>13</label>
    </ligand>
</feature>
<feature type="binding site" evidence="2">
    <location>
        <position position="2582"/>
    </location>
    <ligand>
        <name>Cu cation</name>
        <dbReference type="ChEBI" id="CHEBI:23378"/>
        <label>13</label>
    </ligand>
</feature>
<feature type="binding site" evidence="2">
    <location>
        <position position="2591"/>
    </location>
    <ligand>
        <name>Cu cation</name>
        <dbReference type="ChEBI" id="CHEBI:23378"/>
        <label>13</label>
    </ligand>
</feature>
<feature type="binding site" evidence="2">
    <location>
        <position position="2691"/>
    </location>
    <ligand>
        <name>Cu cation</name>
        <dbReference type="ChEBI" id="CHEBI:23378"/>
        <label>14</label>
    </ligand>
</feature>
<feature type="binding site" evidence="2">
    <location>
        <position position="2695"/>
    </location>
    <ligand>
        <name>Cu cation</name>
        <dbReference type="ChEBI" id="CHEBI:23378"/>
        <label>14</label>
    </ligand>
</feature>
<feature type="binding site" evidence="2">
    <location>
        <position position="2722"/>
    </location>
    <ligand>
        <name>Cu cation</name>
        <dbReference type="ChEBI" id="CHEBI:23378"/>
        <label>14</label>
    </ligand>
</feature>
<feature type="binding site" evidence="2">
    <location>
        <position position="2970"/>
    </location>
    <ligand>
        <name>Cu cation</name>
        <dbReference type="ChEBI" id="CHEBI:23378"/>
        <label>15</label>
    </ligand>
</feature>
<feature type="binding site" evidence="2">
    <location>
        <position position="2989"/>
    </location>
    <ligand>
        <name>Cu cation</name>
        <dbReference type="ChEBI" id="CHEBI:23378"/>
        <label>15</label>
    </ligand>
</feature>
<feature type="binding site" evidence="2">
    <location>
        <position position="2998"/>
    </location>
    <ligand>
        <name>Cu cation</name>
        <dbReference type="ChEBI" id="CHEBI:23378"/>
        <label>15</label>
    </ligand>
</feature>
<feature type="binding site" evidence="2">
    <location>
        <position position="3099"/>
    </location>
    <ligand>
        <name>Cu cation</name>
        <dbReference type="ChEBI" id="CHEBI:23378"/>
        <label>16</label>
    </ligand>
</feature>
<feature type="binding site" evidence="2">
    <location>
        <position position="3103"/>
    </location>
    <ligand>
        <name>Cu cation</name>
        <dbReference type="ChEBI" id="CHEBI:23378"/>
        <label>16</label>
    </ligand>
</feature>
<feature type="binding site" evidence="2">
    <location>
        <position position="3130"/>
    </location>
    <ligand>
        <name>Cu cation</name>
        <dbReference type="ChEBI" id="CHEBI:23378"/>
        <label>16</label>
    </ligand>
</feature>
<feature type="glycosylation site" description="N-linked (GlcNAc...) asparagine" evidence="4">
    <location>
        <position position="408"/>
    </location>
</feature>
<feature type="glycosylation site" description="N-linked (GlcNAc...) asparagine" evidence="4">
    <location>
        <position position="1183"/>
    </location>
</feature>
<feature type="glycosylation site" description="N-linked (GlcNAc...) asparagine" evidence="4">
    <location>
        <position position="1653"/>
    </location>
</feature>
<feature type="disulfide bond" evidence="2">
    <location>
        <begin position="68"/>
        <end position="78"/>
    </location>
</feature>
<feature type="disulfide bond" evidence="2">
    <location>
        <begin position="190"/>
        <end position="257"/>
    </location>
</feature>
<feature type="disulfide bond" evidence="2">
    <location>
        <begin position="344"/>
        <end position="356"/>
    </location>
</feature>
<feature type="disulfide bond" evidence="2">
    <location>
        <begin position="489"/>
        <end position="500"/>
    </location>
</feature>
<feature type="disulfide bond" evidence="2">
    <location>
        <begin position="612"/>
        <end position="678"/>
    </location>
</feature>
<feature type="disulfide bond" evidence="2">
    <location>
        <begin position="900"/>
        <end position="911"/>
    </location>
</feature>
<feature type="disulfide bond" evidence="2">
    <location>
        <begin position="1023"/>
        <end position="1090"/>
    </location>
</feature>
<feature type="disulfide bond" evidence="2">
    <location>
        <begin position="1180"/>
        <end position="1187"/>
    </location>
</feature>
<feature type="disulfide bond" evidence="2">
    <location>
        <begin position="1319"/>
        <end position="1328"/>
    </location>
</feature>
<feature type="disulfide bond" evidence="2">
    <location>
        <begin position="1434"/>
        <end position="1501"/>
    </location>
</feature>
<feature type="disulfide bond" evidence="2">
    <location>
        <begin position="1590"/>
        <end position="1599"/>
    </location>
</feature>
<feature type="disulfide bond" evidence="2">
    <location>
        <begin position="1732"/>
        <end position="1743"/>
    </location>
</feature>
<feature type="disulfide bond" evidence="2">
    <location>
        <begin position="1858"/>
        <end position="1925"/>
    </location>
</feature>
<feature type="disulfide bond" evidence="2">
    <location>
        <begin position="2014"/>
        <end position="2020"/>
    </location>
</feature>
<feature type="disulfide bond" evidence="2">
    <location>
        <begin position="2149"/>
        <end position="2159"/>
    </location>
</feature>
<feature type="disulfide bond" evidence="2">
    <location>
        <begin position="2271"/>
        <end position="2338"/>
    </location>
</feature>
<feature type="disulfide bond" evidence="2">
    <location>
        <begin position="2425"/>
        <end position="2431"/>
    </location>
</feature>
<feature type="disulfide bond" evidence="2">
    <location>
        <begin position="2569"/>
        <end position="2579"/>
    </location>
</feature>
<feature type="disulfide bond" evidence="2">
    <location>
        <begin position="2681"/>
        <end position="2748"/>
    </location>
</feature>
<feature type="disulfide bond" evidence="2">
    <location>
        <begin position="2835"/>
        <end position="2841"/>
    </location>
</feature>
<feature type="disulfide bond" evidence="2">
    <location>
        <begin position="2976"/>
        <end position="2986"/>
    </location>
</feature>
<feature type="disulfide bond" evidence="2">
    <location>
        <begin position="3089"/>
        <end position="3156"/>
    </location>
</feature>
<feature type="disulfide bond" evidence="2">
    <location>
        <begin position="3374"/>
        <end position="3407"/>
    </location>
</feature>
<feature type="cross-link" description="2'-(S-cysteinyl)-histidine (Cys-His)" evidence="1">
    <location>
        <begin position="79"/>
        <end position="81"/>
    </location>
</feature>
<feature type="cross-link" description="2'-(S-cysteinyl)-histidine (Cys-His)" evidence="1">
    <location>
        <begin position="501"/>
        <end position="503"/>
    </location>
</feature>
<feature type="cross-link" description="2'-(S-cysteinyl)-histidine (Cys-His)" evidence="1">
    <location>
        <begin position="912"/>
        <end position="914"/>
    </location>
</feature>
<feature type="cross-link" description="2'-(S-cysteinyl)-histidine (Cys-His)" evidence="1">
    <location>
        <begin position="1329"/>
        <end position="1331"/>
    </location>
</feature>
<feature type="cross-link" description="2'-(S-cysteinyl)-histidine (Cys-His)" evidence="1">
    <location>
        <begin position="1744"/>
        <end position="1746"/>
    </location>
</feature>
<feature type="cross-link" description="2'-(S-cysteinyl)-histidine (Cys-His)" evidence="1">
    <location>
        <begin position="2160"/>
        <end position="2162"/>
    </location>
</feature>
<feature type="cross-link" description="2'-(S-cysteinyl)-histidine (Cys-His)" evidence="1">
    <location>
        <begin position="2580"/>
        <end position="2582"/>
    </location>
</feature>
<feature type="cross-link" description="2'-(S-cysteinyl)-histidine (Cys-His)" evidence="1">
    <location>
        <begin position="2987"/>
        <end position="2989"/>
    </location>
</feature>
<keyword id="KW-0186">Copper</keyword>
<keyword id="KW-0903">Direct protein sequencing</keyword>
<keyword id="KW-1015">Disulfide bond</keyword>
<keyword id="KW-0325">Glycoprotein</keyword>
<keyword id="KW-0479">Metal-binding</keyword>
<keyword id="KW-0561">Oxygen transport</keyword>
<keyword id="KW-0677">Repeat</keyword>
<keyword id="KW-0964">Secreted</keyword>
<keyword id="KW-0732">Signal</keyword>
<keyword id="KW-0883">Thioether bond</keyword>
<keyword id="KW-0813">Transport</keyword>
<keyword id="KW-0853">WD repeat</keyword>
<evidence type="ECO:0000250" key="1">
    <source>
        <dbReference type="UniProtKB" id="P56824"/>
    </source>
</evidence>
<evidence type="ECO:0000250" key="2">
    <source>
        <dbReference type="UniProtKB" id="Q10583"/>
    </source>
</evidence>
<evidence type="ECO:0000255" key="3"/>
<evidence type="ECO:0000255" key="4">
    <source>
        <dbReference type="PROSITE-ProRule" id="PRU00498"/>
    </source>
</evidence>
<evidence type="ECO:0000256" key="5">
    <source>
        <dbReference type="SAM" id="MobiDB-lite"/>
    </source>
</evidence>
<evidence type="ECO:0000269" key="6">
    <source>
    </source>
</evidence>
<evidence type="ECO:0000269" key="7">
    <source>
    </source>
</evidence>
<evidence type="ECO:0000303" key="8">
    <source>
    </source>
</evidence>
<evidence type="ECO:0000303" key="9">
    <source ref="1"/>
</evidence>
<evidence type="ECO:0000305" key="10"/>
<evidence type="ECO:0000305" key="11">
    <source>
    </source>
</evidence>
<evidence type="ECO:0000305" key="12">
    <source>
    </source>
</evidence>
<evidence type="ECO:0000312" key="13">
    <source>
        <dbReference type="EMBL" id="CAG28310.1"/>
    </source>
</evidence>
<sequence length="3421" mass="391513">MWTILALLTATLLFEGAFSVDTVVRKNVDSLSSDEVLALEKALDDLQQDDSNQGYQAIAGYHGVPTMCVDKHEKNVACCLHGMPSFPLWHRLYVVQLERALIRKKATISIPYWDWTSELTHLPELVSHPLFVGTEGGKAHDNSWYRADITFLNKKTSRAVDDRLFEKVQPGHHTRLMEGILDALEQDEFCKFEIQFELAHNAIHYLVGGRHTYSMSHLEYTSYDPLFFLHHSNTDRIFAIWQRLQQLRGKDPNSADCAHNLIHTPMEPFDRDTNPLDLTREHAKPADSFDYGRLGYQYDDLSLNGMSPEELNVYLGERAAKERTFASFILSGFGGSANVVVYVCRPAHDEISDDQCIKAGDFFLLGGPTEMKWGFYRAYHFDVTDSVASIDDDGHGHYYVKSELFSVNGSALSNDILRQPTLVHRPAKGHFDKPPVPVAQANLAVRKNINDLTAEETYSLRKAMERFQNDKSVDGYQATVEFHALPARCPRPDAKDRFACCVHGMATFPHWHRLFVTQVEDALLRRGSTIGLPNWDWTMPMDHLPELATSETYLDPVTGETKNNPFHHAQVAFENGVTSRNPDAKLFMKPTYGDHTYLFDSMIYAFEQEDFCDFEVQYELTHNAIHAWVGGSEKYSMSSLHYTAFDPIFYLHHSNVDRLWAIWQALQIRRGKSYKAHCASSQEREPLKPFAFSSPLNNNEKTYHNSVPTNVYDYVGVLHYRYDDLQFGGMTMSELEEYIHKQTQHDRTFAGFFLSYIGTSASVDIFINREGHDKYKVGSFVVLGGSKEMKWGFDRMYKYEITEALKTLNVAVDDGFSITVEITDVDGSPPSADLIPPPAIIFERADAKDFGHSRKIRKAVDSLTVEEQTSLRRAMADLQDDKTSGGFQQIAAFHGEPKWCPSPEAEKKFACCVHGMAVFPHWHRLLTVQGENALRKHGFTGGLPYWDWTRSMSALPHFVADPTYNDAISSQEEDNPWHHGHIDSVGHDTTRDVRDDLYQSPGFGHYTDIAKQVLLAFEQDDFCDFEVQFEIAHNFIHALVGGNEPYSMSSLRYTTYDPIFFLHRSNTDRLWAIWQALQKYRGKPYNTANCAIASMRKPLQPFGLDSVINPDDETREHSVPFRVFDYKNNFDYEYESLAFNGLSIAQLDRELQRRKSHDRVFAGFLLHEIGQSALVKFYVCKHNVSDCDHYAGEFYILGDEAEMPWRYDRVYKYEITQQLHDLDLHVGDNFFLKYEAFDLNGGSLGGSIFSQPSVIFEPAAGSHQADEYREAVTSASHIRKNIRDLSEGEIESIRSAFLQIQKEGIYENIAKFHGKPGLCEHDGHPVACCVHGMPTFPHWHRLYVLQVENALLERGSAVAVPYWDWTEKADSLPSLINDATYFNSRSQTFDPNPFFRGHIAFENAVTSRDPQPELWDNKDFYENVMLALEQDNFCDFEIQLELIHNALHSRLGGRAKYSLSSLDYTAFDPVFFLHHANVDRIWAIWQDLQRYRKKPYNEADCAVNEMRKPLQPFNNPELNSDSMTLKHNLPQDSFDYQNRFRYQYDNLQFNHFSIQKLDQTIQARKQHDRVFAGFILHNIGTSAVVDIYICVEQGGEQNCKTKAGSFTILGGETEMPFHFDRLYKFDITSALHKLGVPLDGHGFDIKVDVRAVNGSHLDQHILNEPSLLFVPGERKNIYYDGLSQHNLVRKEVSSLTTLEKHFLRKALKNMQADDSPDGYQAIASFHALPPLCPSPSAAHRHACCLHGMATFPQWHRLYTVQFEDSLKRHGSIVGLPYWDWLKPQSALPDLVTQETYEHLFSHKTFPNPFLKANIEFEGEGVTTERDVDAEHLFAKGNLVYNNWFCNQALYALEQENYCDFEIQFEILHNGIHSWVGGSKTHSIGHLHYASYDPLFYIHHSQTDRIWAIWQALQEHRGLSGKEAHCALEQMKDPLKPFSFGSPYNLNKRTQEFSKPEDTFDYHRFGYEYDSLEFVGMSVSSLHNYIKQQQEADRVFAGFLLKGFGQSASVSFDICRPDQSCQEAGYFSVLGGSSEMPWQFDRLYKYDITKTLKDMKLRYDDTFTIKVHIKDIAGAELDSDLIPTPSVLLEEGKHGINVRHVGRNRIRMELSELTERDLASLKSAMRSLQADDGVNGYQAIASFHGLPASCHDDEGHEIACCIHGMPVFPHWHRLYTLQMDMALLSHGSAVAIPYWDWTKPISKLPDLFTSPEYYDPWRDAVVNNPFAKGYIKSEDAYTVRDPQDILYHLQDETGTSVLLDQTLLALEQTDFCDFEVQFEVVHNAIHYLVGGRQVYALSSQHYASYDPAFFIHHSFVDKIWAVWQALQKKRKRPYHKADCALNMMTKPMRPFAHDFNHNGFTKMHAVPNTLFDFQDLFYTYDNLEIAGMNVNQLEAEINRRKSQTRVFAGFLLHGIGRSADVRFWICKTADDCHASGMIFILGGSKEMHWAYDRNFKYDITQALKAQSIHPEDVFDTDAPFFIKVEVHGVNKTALPSSAIPAPTIIYSAGEGHTDDHGSDHIAGSGVRKDVTSLTASEIENLRHALQSVMDDDGPNGFQAIAAYHGSPPMCHMXDGRDVACCTHGMASFPHWHRLFVKQMEDALAAHGAHIGIPYWDWTSAFSHLPALVTDHEHNPFHHGHIAHRNVDTSRSPRDMLFNDPEHGSESFFYRQVLLALEQTDFCQFEVQFEITHNAIHSWTGGHTPYGMSSLEYTAYDPLFYLHHSNTDRIWAIWQALQKYRGFQYNAAHCDIQVLKQPLKPFSESRNPNPVTRANSRAVDSFDYERLNYQYDTLTFHGHSISELDAMLQERKKEERTFAAFLLHGFGASADVSFDVCTPDGHCAFAGTFAVLGGELEMPWSFERLFRYDITKVLKQMNLHYDSEFHFELKIVGTDGTELPSDRIKSPTIEHHGGDHHGGDTSGHDHSERHDGFFRKEVGSLSLDEANDLKNALYKLQNDQGPNGYESIAGYHGYPFLCPEHGEDQYACCVHGMPVFPHWHRLHTIQFERALKEHGSHLGIPYWDWTKSMIALPAFFADSSNSNPFYKYHIMKAGHDTARSPSDLLFNQPQLHGYDYLYYLALSTLEEDNYCDFEVHYEILHNAVHLWLGGTETYSMSSLAFSAYDPVFMILHSGLDRLWIIWQELQKLRKKPYNAAKCAGHMMDEPLHPFNYESANHDSFTRANAKPSTVFDSHKFNYHYDNPDVRGNSIQEISAIIHDLRNQPRVFAGFVLSGIYTSANVKIYLVREGHDDENVGSFVVLGGPKEMPWAYERIFKYDITEVANRLNMHHDDTFNFRLEVQSYTGEMVTHHLPEPLIIYRPAKQEYDVLVIPLGSGHKLPPKVIVKRGTRIMFHPVDDTVNRPVVDLGSHTALYNCVVPPFTYNGYELDHAYSLRDGHYYIAGPTKDLCTSGNVRIHIHIEDE</sequence>
<accession>Q10584</accession>
<accession>Q1MVA1</accession>
<comment type="function">
    <text evidence="12">Hemocyanins are copper-containing oxygen carriers occurring freely dissolved in the hemolymph of many mollusks and arthropods.</text>
</comment>
<comment type="subunit">
    <text evidence="6">Homo-didecamer and homo-multidecamer.</text>
</comment>
<comment type="subcellular location">
    <subcellularLocation>
        <location>Secreted</location>
        <location>Extracellular space</location>
    </subcellularLocation>
</comment>
<comment type="tissue specificity">
    <text evidence="7">Hemolymph.</text>
</comment>
<comment type="domain">
    <text evidence="2">The protein is composed of 8 globular functional units (a-&gt;h), forming a 'pearl chain'. Each unit is separated from the next by a linker. Since the lengths but not the exact positions are known, lengths are indicated here in free text. Linker lengths in amino acids are: 20 (a-&gt;b), 13 (b-&gt;c), 19 (c-&gt;d), 16 (d-&gt;e), 14 (e-&gt;f), 17 (f-&gt;g), and 17 (g-&gt;h).</text>
</comment>
<comment type="PTM">
    <text evidence="2">Probably N-glycosylated. Asn-2489 is buried deeply in the protein which make it inaccessible for sugar attachment.</text>
</comment>
<comment type="biotechnology">
    <text evidence="11">Potent immunogen used classically as a carrier protein for haptens and more recently in human vaccines and for immunotherapy of bladder cancer.</text>
</comment>
<comment type="similarity">
    <text evidence="10">Belongs to the tyrosinase family. Hemocyanin subfamily.</text>
</comment>
<protein>
    <recommendedName>
        <fullName evidence="13">Hemocyanin 2</fullName>
    </recommendedName>
    <alternativeName>
        <fullName evidence="8">Keyhole limpet hemocyanin B</fullName>
        <shortName evidence="8">KLH-B</shortName>
    </alternativeName>
</protein>
<reference evidence="13" key="1">
    <citation type="submission" date="2004-04" db="EMBL/GenBank/DDBJ databases">
        <title>KLH1 and KLH2: cDNAs, genes and evolutionary implications.</title>
        <authorList>
            <person name="Lieb B."/>
            <person name="Streit K."/>
            <person name="Markl J."/>
        </authorList>
    </citation>
    <scope>NUCLEOTIDE SEQUENCE [GENOMIC DNA]</scope>
</reference>
<reference key="2">
    <citation type="journal article" date="1996" name="Comp. Biochem. Physiol.">
        <title>Keyhole limpet hemocyanin: structural and functional characterization of two different subunits and multimers.</title>
        <authorList>
            <person name="Swerdlow R.D."/>
            <person name="Ebert R.F."/>
            <person name="Lee P."/>
            <person name="Bonaventura C."/>
            <person name="Miller K.I."/>
        </authorList>
    </citation>
    <scope>PROTEIN SEQUENCE OF 20-31</scope>
    <scope>TISSUE SPECIFICITY</scope>
</reference>
<reference key="3">
    <citation type="journal article" date="1999" name="Micron">
        <title>Keyhole limpet hemocyanin (KLH): a biomedical review.</title>
        <authorList>
            <person name="Harris J.R."/>
            <person name="Markl J."/>
        </authorList>
    </citation>
    <scope>REVIEW</scope>
    <scope>BIOTECHNOLOGY</scope>
</reference>
<reference key="4">
    <citation type="journal article" date="2000" name="Micron">
        <title>Haliotis tuberculata hemocyanin (HtH): analysis of oligomeric stability of HtH1 and HtH2, and comparison with keyhole limpet hemocyanin KLH1 and KLH2.</title>
        <authorList>
            <person name="Harris J.R."/>
            <person name="Scheffler D."/>
            <person name="Gebauer W."/>
            <person name="Lehnert R."/>
            <person name="Markl J."/>
        </authorList>
    </citation>
    <scope>SUBUNIT</scope>
</reference>